<proteinExistence type="evidence at protein level"/>
<sequence length="121" mass="13751">MQDTIFLKGMRFYGYHGALSAENEIGQIFKVDVTLKVDLSEAGRTDNVIDTVHYGEVFEEVKSIMEGKAVNLLEHLAERIANRINSQYNRVMETKVRITKENPPIPGHYDGVGIEIVRENK</sequence>
<feature type="chain" id="PRO_0000168283" description="Dihydroneopterin aldolase">
    <location>
        <begin position="1"/>
        <end position="121"/>
    </location>
</feature>
<feature type="active site" description="Proton donor/acceptor" evidence="6 7">
    <location>
        <position position="100"/>
    </location>
</feature>
<feature type="binding site" evidence="6 7 8">
    <location>
        <position position="22"/>
    </location>
    <ligand>
        <name>substrate</name>
    </ligand>
</feature>
<feature type="binding site" evidence="6 7 8">
    <location>
        <position position="54"/>
    </location>
    <ligand>
        <name>substrate</name>
    </ligand>
</feature>
<feature type="binding site" evidence="6 7 8">
    <location>
        <begin position="73"/>
        <end position="74"/>
    </location>
    <ligand>
        <name>substrate</name>
    </ligand>
</feature>
<feature type="strand" evidence="9">
    <location>
        <begin position="4"/>
        <end position="14"/>
    </location>
</feature>
<feature type="strand" evidence="9">
    <location>
        <begin position="17"/>
        <end position="19"/>
    </location>
</feature>
<feature type="helix" evidence="9">
    <location>
        <begin position="20"/>
        <end position="25"/>
    </location>
</feature>
<feature type="strand" evidence="9">
    <location>
        <begin position="27"/>
        <end position="37"/>
    </location>
</feature>
<feature type="helix" evidence="9">
    <location>
        <begin position="40"/>
        <end position="45"/>
    </location>
</feature>
<feature type="helix" evidence="9">
    <location>
        <begin position="48"/>
        <end position="50"/>
    </location>
</feature>
<feature type="helix" evidence="9">
    <location>
        <begin position="54"/>
        <end position="65"/>
    </location>
</feature>
<feature type="strand" evidence="10">
    <location>
        <begin position="66"/>
        <end position="68"/>
    </location>
</feature>
<feature type="helix" evidence="9">
    <location>
        <begin position="73"/>
        <end position="87"/>
    </location>
</feature>
<feature type="strand" evidence="9">
    <location>
        <begin position="91"/>
        <end position="102"/>
    </location>
</feature>
<feature type="strand" evidence="9">
    <location>
        <begin position="112"/>
        <end position="119"/>
    </location>
</feature>
<evidence type="ECO:0000250" key="1">
    <source>
        <dbReference type="UniProtKB" id="P0AC16"/>
    </source>
</evidence>
<evidence type="ECO:0000269" key="2">
    <source>
    </source>
</evidence>
<evidence type="ECO:0000269" key="3">
    <source>
    </source>
</evidence>
<evidence type="ECO:0000303" key="4">
    <source>
    </source>
</evidence>
<evidence type="ECO:0000305" key="5"/>
<evidence type="ECO:0000305" key="6">
    <source>
    </source>
</evidence>
<evidence type="ECO:0000305" key="7">
    <source>
    </source>
</evidence>
<evidence type="ECO:0007744" key="8">
    <source>
        <dbReference type="PDB" id="2NM2"/>
    </source>
</evidence>
<evidence type="ECO:0007829" key="9">
    <source>
        <dbReference type="PDB" id="1DHN"/>
    </source>
</evidence>
<evidence type="ECO:0007829" key="10">
    <source>
        <dbReference type="PDB" id="2NM2"/>
    </source>
</evidence>
<name>FOLB_STAAU</name>
<protein>
    <recommendedName>
        <fullName evidence="4">Dihydroneopterin aldolase</fullName>
        <shortName evidence="4">DHNA</shortName>
        <ecNumber evidence="3">4.1.2.25</ecNumber>
    </recommendedName>
    <alternativeName>
        <fullName>7,8-dihydroneopterin 2'-epimerase</fullName>
    </alternativeName>
    <alternativeName>
        <fullName>7,8-dihydroneopterin aldolase</fullName>
    </alternativeName>
    <alternativeName>
        <fullName>7,8-dihydroneopterin epimerase</fullName>
        <ecNumber evidence="1">5.1.99.8</ecNumber>
    </alternativeName>
    <alternativeName>
        <fullName>Dihydroneopterin epimerase</fullName>
    </alternativeName>
</protein>
<keyword id="KW-0002">3D-structure</keyword>
<keyword id="KW-0289">Folate biosynthesis</keyword>
<keyword id="KW-0413">Isomerase</keyword>
<keyword id="KW-0456">Lyase</keyword>
<reference key="1">
    <citation type="journal article" date="1998" name="Nat. Struct. Biol.">
        <title>Crystal structure and reaction mechanism of 7,8-dihydroneopterin aldolase from Staphylococcus aureus.</title>
        <authorList>
            <person name="Hennig M."/>
            <person name="D'Arcy A."/>
            <person name="Hampele I.C."/>
            <person name="Page M.G."/>
            <person name="Oefner C."/>
            <person name="Dale G.E."/>
        </authorList>
    </citation>
    <scope>X-RAY CRYSTALLOGRAPHY (1.65 ANGSTROMS) OF APOENZYME AND IN COMPLEX WITH 6-HYDROXYMETHYL-7,8-DIHYDRONEOPTERIN</scope>
    <scope>FUNCTION</scope>
    <scope>CATALYTIC ACTIVITY</scope>
    <scope>BIOPHYSICOCHEMICAL PROPERTIES</scope>
    <scope>REACTION MECHANISM</scope>
    <scope>ACTIVE SITE</scope>
    <scope>SUBUNIT</scope>
    <source>
        <strain>ATCC 25923 / DSM 1104 / JCM 2413 / NBRC 14462 / NCIMB 12702 / NCTC 12981 / Seattle 1945</strain>
    </source>
</reference>
<reference key="2">
    <citation type="journal article" date="2004" name="J. Med. Chem.">
        <title>Discovery of potent inhibitors of dihydroneopterin aldolase using CrystaLEAD high-throughput X-ray crystallographic screening and structure-directed lead optimization.</title>
        <authorList>
            <person name="Sanders W.J."/>
            <person name="Nienaber V.L."/>
            <person name="Lerner C.G."/>
            <person name="McCall J.O."/>
            <person name="Merrick S.M."/>
            <person name="Swanson S.J."/>
            <person name="Harlan J.E."/>
            <person name="Stoll V.S."/>
            <person name="Stamper G.F."/>
            <person name="Betz S.F."/>
            <person name="Condroski K.R."/>
            <person name="Meadows R.P."/>
            <person name="Severin J.M."/>
            <person name="Walter K.A."/>
            <person name="Magdalinos P."/>
            <person name="Jakob C.G."/>
            <person name="Wagner R."/>
            <person name="Beutel B.A."/>
        </authorList>
    </citation>
    <scope>X-RAY CRYSTALLOGRAPHY (2.00 ANGSTROMS) IN COMPLEXES WITH 7,8-DIHYDRONEOPTERIN ANALOGS</scope>
</reference>
<reference key="3">
    <citation type="journal article" date="2007" name="J. Mol. Biol.">
        <title>Structural basis for the aldolase and epimerase activities of Staphylococcus aureus dihydroneopterin aldolase.</title>
        <authorList>
            <person name="Blaszczyk J."/>
            <person name="Li Y."/>
            <person name="Gan J."/>
            <person name="Yan H."/>
            <person name="Ji X."/>
        </authorList>
    </citation>
    <scope>X-RAY CRYSTALLOGRAPHY (1.68 ANGSTROMS) IN COMPLEXES WITH D-MONAPTERIN AND L-NEOPTERIN</scope>
    <scope>FUNCTION</scope>
    <scope>REACTION MECHANISM</scope>
    <scope>ACTIVE SITE</scope>
</reference>
<organism>
    <name type="scientific">Staphylococcus aureus</name>
    <dbReference type="NCBI Taxonomy" id="1280"/>
    <lineage>
        <taxon>Bacteria</taxon>
        <taxon>Bacillati</taxon>
        <taxon>Bacillota</taxon>
        <taxon>Bacilli</taxon>
        <taxon>Bacillales</taxon>
        <taxon>Staphylococcaceae</taxon>
        <taxon>Staphylococcus</taxon>
    </lineage>
</organism>
<comment type="function">
    <text evidence="2 3">Catalyzes the conversion of 7,8-dihydroneopterin to 6-hydroxymethyl-7,8-dihydropterin. Can also catalyze the epimerization of carbon 2' of dihydroneopterin to dihydromonapterin.</text>
</comment>
<comment type="catalytic activity">
    <reaction evidence="3">
        <text>7,8-dihydroneopterin = 6-hydroxymethyl-7,8-dihydropterin + glycolaldehyde</text>
        <dbReference type="Rhea" id="RHEA:10540"/>
        <dbReference type="ChEBI" id="CHEBI:17001"/>
        <dbReference type="ChEBI" id="CHEBI:17071"/>
        <dbReference type="ChEBI" id="CHEBI:44841"/>
        <dbReference type="EC" id="4.1.2.25"/>
    </reaction>
</comment>
<comment type="catalytic activity">
    <reaction evidence="1">
        <text>7,8-dihydroneopterin = 7,8-dihydromonapterin</text>
        <dbReference type="Rhea" id="RHEA:45328"/>
        <dbReference type="ChEBI" id="CHEBI:17001"/>
        <dbReference type="ChEBI" id="CHEBI:71175"/>
        <dbReference type="EC" id="5.1.99.8"/>
    </reaction>
</comment>
<comment type="biophysicochemical properties">
    <phDependence>
        <text evidence="3">Optimum pH is 9.5.</text>
    </phDependence>
</comment>
<comment type="pathway">
    <text>Cofactor biosynthesis; tetrahydrofolate biosynthesis; 2-amino-4-hydroxy-6-hydroxymethyl-7,8-dihydropteridine diphosphate from 7,8-dihydroneopterin triphosphate: step 3/4.</text>
</comment>
<comment type="subunit">
    <text evidence="3">Homooctamer. Four molecules assemble into a ring, and two rings come together to give a cylinder with a hole of at least 13 a diameter.</text>
</comment>
<comment type="similarity">
    <text evidence="5">Belongs to the DHNA family.</text>
</comment>
<gene>
    <name type="primary">folB</name>
</gene>
<dbReference type="EC" id="4.1.2.25" evidence="3"/>
<dbReference type="EC" id="5.1.99.8" evidence="1"/>
<dbReference type="RefSeq" id="WP_001154303.1">
    <property type="nucleotide sequence ID" value="NZ_WKIW01000023.1"/>
</dbReference>
<dbReference type="PDB" id="1DHN">
    <property type="method" value="X-ray"/>
    <property type="resolution" value="1.65 A"/>
    <property type="chains" value="A=1-121"/>
</dbReference>
<dbReference type="PDB" id="1RRI">
    <property type="method" value="X-ray"/>
    <property type="resolution" value="2.00 A"/>
    <property type="chains" value="A=1-121"/>
</dbReference>
<dbReference type="PDB" id="1RRW">
    <property type="method" value="X-ray"/>
    <property type="resolution" value="2.21 A"/>
    <property type="chains" value="A=1-121"/>
</dbReference>
<dbReference type="PDB" id="1RRY">
    <property type="method" value="X-ray"/>
    <property type="resolution" value="2.70 A"/>
    <property type="chains" value="A=1-121"/>
</dbReference>
<dbReference type="PDB" id="1RS2">
    <property type="method" value="X-ray"/>
    <property type="resolution" value="2.31 A"/>
    <property type="chains" value="A=1-121"/>
</dbReference>
<dbReference type="PDB" id="1RS4">
    <property type="method" value="X-ray"/>
    <property type="resolution" value="2.70 A"/>
    <property type="chains" value="A=1-121"/>
</dbReference>
<dbReference type="PDB" id="1RSD">
    <property type="method" value="X-ray"/>
    <property type="resolution" value="2.50 A"/>
    <property type="chains" value="A=1-121"/>
</dbReference>
<dbReference type="PDB" id="1RSI">
    <property type="method" value="X-ray"/>
    <property type="resolution" value="2.20 A"/>
    <property type="chains" value="A=1-121"/>
</dbReference>
<dbReference type="PDB" id="1U68">
    <property type="method" value="X-ray"/>
    <property type="resolution" value="2.40 A"/>
    <property type="chains" value="A=1-121"/>
</dbReference>
<dbReference type="PDB" id="2DHN">
    <property type="method" value="X-ray"/>
    <property type="resolution" value="2.20 A"/>
    <property type="chains" value="A=1-121"/>
</dbReference>
<dbReference type="PDB" id="2NM2">
    <property type="method" value="X-ray"/>
    <property type="resolution" value="1.70 A"/>
    <property type="chains" value="A/B/C/D=1-121"/>
</dbReference>
<dbReference type="PDB" id="2NM3">
    <property type="method" value="X-ray"/>
    <property type="resolution" value="1.68 A"/>
    <property type="chains" value="A=1-121"/>
</dbReference>
<dbReference type="PDBsum" id="1DHN"/>
<dbReference type="PDBsum" id="1RRI"/>
<dbReference type="PDBsum" id="1RRW"/>
<dbReference type="PDBsum" id="1RRY"/>
<dbReference type="PDBsum" id="1RS2"/>
<dbReference type="PDBsum" id="1RS4"/>
<dbReference type="PDBsum" id="1RSD"/>
<dbReference type="PDBsum" id="1RSI"/>
<dbReference type="PDBsum" id="1U68"/>
<dbReference type="PDBsum" id="2DHN"/>
<dbReference type="PDBsum" id="2NM2"/>
<dbReference type="PDBsum" id="2NM3"/>
<dbReference type="BMRB" id="P56740"/>
<dbReference type="SMR" id="P56740"/>
<dbReference type="ChEMBL" id="CHEMBL3217378"/>
<dbReference type="DrugBank" id="DB01906">
    <property type="generic name" value="3-(5-amino-7-hydroxy-(1,2,3)triazolo(4,5-d)pyrimidin-2-yl)benzoic acid"/>
</dbReference>
<dbReference type="DrugBank" id="DB03571">
    <property type="generic name" value="3-(5-amino-7-hydroxy-[1,2,3]triazolo[4,5-d]pyrimidin-2-yl)-N-(3,5-dichlorobenzyl)-benzamide"/>
</dbReference>
<dbReference type="DrugBank" id="DB03231">
    <property type="generic name" value="3-(5-Amino-7-oxo-3,7-dihydro-2H-[1,2,3]triazolo[4,5-d]pyrimidin-2-yl)-N-(2-{[2-(hydroxymethyl)phenyl]sulfanyl}benzyl)benzamide"/>
</dbReference>
<dbReference type="DrugBank" id="DB02119">
    <property type="generic name" value="6-Hydroxymethyl-7,8-Dihydropterin"/>
</dbReference>
<dbReference type="DrugBank" id="DB04425">
    <property type="generic name" value="7,8-Dihydroneopterin"/>
</dbReference>
<dbReference type="DrugBank" id="DB01778">
    <property type="generic name" value="8-Aminotheophylline"/>
</dbReference>
<dbReference type="DrugBank" id="DB02489">
    <property type="generic name" value="9-Methylguanine"/>
</dbReference>
<dbReference type="DrugBank" id="DB04168">
    <property type="generic name" value="Bropirimine"/>
</dbReference>
<dbReference type="DrugBank" id="DB06906">
    <property type="generic name" value="ethyl 2-amino-4-hydroxypyrimidine-5-carboxylate"/>
</dbReference>
<dbReference type="DrugBank" id="DB04400">
    <property type="generic name" value="L-erythro-7,8-dihydrobiopterin"/>
</dbReference>
<dbReference type="OMA" id="GHYKSVA"/>
<dbReference type="BRENDA" id="4.1.2.25">
    <property type="organism ID" value="3352"/>
</dbReference>
<dbReference type="BRENDA" id="5.1.99.8">
    <property type="organism ID" value="3352"/>
</dbReference>
<dbReference type="UniPathway" id="UPA00077">
    <property type="reaction ID" value="UER00154"/>
</dbReference>
<dbReference type="EvolutionaryTrace" id="P56740"/>
<dbReference type="GO" id="GO:0005737">
    <property type="term" value="C:cytoplasm"/>
    <property type="evidence" value="ECO:0007669"/>
    <property type="project" value="TreeGrafter"/>
</dbReference>
<dbReference type="GO" id="GO:0004150">
    <property type="term" value="F:dihydroneopterin aldolase activity"/>
    <property type="evidence" value="ECO:0007669"/>
    <property type="project" value="UniProtKB-EC"/>
</dbReference>
<dbReference type="GO" id="GO:0016853">
    <property type="term" value="F:isomerase activity"/>
    <property type="evidence" value="ECO:0007669"/>
    <property type="project" value="UniProtKB-KW"/>
</dbReference>
<dbReference type="GO" id="GO:0046656">
    <property type="term" value="P:folic acid biosynthetic process"/>
    <property type="evidence" value="ECO:0007669"/>
    <property type="project" value="UniProtKB-KW"/>
</dbReference>
<dbReference type="GO" id="GO:0046654">
    <property type="term" value="P:tetrahydrofolate biosynthetic process"/>
    <property type="evidence" value="ECO:0007669"/>
    <property type="project" value="UniProtKB-UniPathway"/>
</dbReference>
<dbReference type="CDD" id="cd00534">
    <property type="entry name" value="DHNA_DHNTPE"/>
    <property type="match status" value="1"/>
</dbReference>
<dbReference type="FunFam" id="3.30.1130.10:FF:000003">
    <property type="entry name" value="7,8-dihydroneopterin aldolase"/>
    <property type="match status" value="1"/>
</dbReference>
<dbReference type="Gene3D" id="3.30.1130.10">
    <property type="match status" value="1"/>
</dbReference>
<dbReference type="InterPro" id="IPR006156">
    <property type="entry name" value="Dihydroneopterin_aldolase"/>
</dbReference>
<dbReference type="InterPro" id="IPR006157">
    <property type="entry name" value="FolB_dom"/>
</dbReference>
<dbReference type="InterPro" id="IPR043133">
    <property type="entry name" value="GTP-CH-I_C/QueF"/>
</dbReference>
<dbReference type="NCBIfam" id="TIGR00525">
    <property type="entry name" value="folB"/>
    <property type="match status" value="1"/>
</dbReference>
<dbReference type="NCBIfam" id="TIGR00526">
    <property type="entry name" value="folB_dom"/>
    <property type="match status" value="1"/>
</dbReference>
<dbReference type="PANTHER" id="PTHR42844">
    <property type="entry name" value="DIHYDRONEOPTERIN ALDOLASE 1-RELATED"/>
    <property type="match status" value="1"/>
</dbReference>
<dbReference type="PANTHER" id="PTHR42844:SF1">
    <property type="entry name" value="DIHYDRONEOPTERIN ALDOLASE 1-RELATED"/>
    <property type="match status" value="1"/>
</dbReference>
<dbReference type="Pfam" id="PF02152">
    <property type="entry name" value="FolB"/>
    <property type="match status" value="1"/>
</dbReference>
<dbReference type="SMART" id="SM00905">
    <property type="entry name" value="FolB"/>
    <property type="match status" value="1"/>
</dbReference>
<dbReference type="SUPFAM" id="SSF55620">
    <property type="entry name" value="Tetrahydrobiopterin biosynthesis enzymes-like"/>
    <property type="match status" value="1"/>
</dbReference>
<accession>P56740</accession>